<sequence>MKMILALVVLGLVLVAAEDKYTTKYDNIDVDEILKSDRLFGNYFKCLVDNGKCTPEGRELKKSLPDALKTECSKCSEKQRQNTDKVIRYIIENKPEEWKQLQAKYDPDEIYIKRYRATAEASGIKV</sequence>
<accession>Q9W1C9</accession>
<accession>Q23981</accession>
<accession>Q3LB28</accession>
<name>PEB3_DROME</name>
<gene>
    <name evidence="6" type="primary">EbpIII</name>
    <name evidence="6" type="synonym">PebIII</name>
    <name evidence="6" type="ORF">CG11390</name>
</gene>
<organism evidence="5">
    <name type="scientific">Drosophila melanogaster</name>
    <name type="common">Fruit fly</name>
    <dbReference type="NCBI Taxonomy" id="7227"/>
    <lineage>
        <taxon>Eukaryota</taxon>
        <taxon>Metazoa</taxon>
        <taxon>Ecdysozoa</taxon>
        <taxon>Arthropoda</taxon>
        <taxon>Hexapoda</taxon>
        <taxon>Insecta</taxon>
        <taxon>Pterygota</taxon>
        <taxon>Neoptera</taxon>
        <taxon>Endopterygota</taxon>
        <taxon>Diptera</taxon>
        <taxon>Brachycera</taxon>
        <taxon>Muscomorpha</taxon>
        <taxon>Ephydroidea</taxon>
        <taxon>Drosophilidae</taxon>
        <taxon>Drosophila</taxon>
        <taxon>Sophophora</taxon>
    </lineage>
</organism>
<evidence type="ECO:0000250" key="1"/>
<evidence type="ECO:0000255" key="2"/>
<evidence type="ECO:0000269" key="3">
    <source>
    </source>
</evidence>
<evidence type="ECO:0000305" key="4"/>
<evidence type="ECO:0000312" key="5">
    <source>
        <dbReference type="EMBL" id="AAF47140.2"/>
    </source>
</evidence>
<evidence type="ECO:0000312" key="6">
    <source>
        <dbReference type="FlyBase" id="FBgn0011695"/>
    </source>
</evidence>
<proteinExistence type="evidence at transcript level"/>
<comment type="function">
    <text evidence="1">Protein component of the posterior mating plug.</text>
</comment>
<comment type="subcellular location">
    <subcellularLocation>
        <location evidence="4">Secreted</location>
    </subcellularLocation>
</comment>
<comment type="tissue specificity">
    <text evidence="3">Specifically expressed in the ejaculatory bulb and seminal fluid.</text>
</comment>
<comment type="similarity">
    <text evidence="4">Belongs to the insect A10/OS-D protein family.</text>
</comment>
<keyword id="KW-0085">Behavior</keyword>
<keyword id="KW-1185">Reference proteome</keyword>
<keyword id="KW-0964">Secreted</keyword>
<keyword id="KW-0732">Signal</keyword>
<reference key="1">
    <citation type="journal article" date="2006" name="Chem. Senses">
        <title>Genome and EST analyses and expression of a gene family with putative functions in insect chemoreception.</title>
        <authorList>
            <person name="Zhou J.-J."/>
            <person name="Kan Y."/>
            <person name="Antoniw J."/>
            <person name="Pickett J.A."/>
            <person name="Field L.M."/>
        </authorList>
    </citation>
    <scope>NUCLEOTIDE SEQUENCE [MRNA]</scope>
</reference>
<reference key="2">
    <citation type="journal article" date="2000" name="Science">
        <title>The genome sequence of Drosophila melanogaster.</title>
        <authorList>
            <person name="Adams M.D."/>
            <person name="Celniker S.E."/>
            <person name="Holt R.A."/>
            <person name="Evans C.A."/>
            <person name="Gocayne J.D."/>
            <person name="Amanatides P.G."/>
            <person name="Scherer S.E."/>
            <person name="Li P.W."/>
            <person name="Hoskins R.A."/>
            <person name="Galle R.F."/>
            <person name="George R.A."/>
            <person name="Lewis S.E."/>
            <person name="Richards S."/>
            <person name="Ashburner M."/>
            <person name="Henderson S.N."/>
            <person name="Sutton G.G."/>
            <person name="Wortman J.R."/>
            <person name="Yandell M.D."/>
            <person name="Zhang Q."/>
            <person name="Chen L.X."/>
            <person name="Brandon R.C."/>
            <person name="Rogers Y.-H.C."/>
            <person name="Blazej R.G."/>
            <person name="Champe M."/>
            <person name="Pfeiffer B.D."/>
            <person name="Wan K.H."/>
            <person name="Doyle C."/>
            <person name="Baxter E.G."/>
            <person name="Helt G."/>
            <person name="Nelson C.R."/>
            <person name="Miklos G.L.G."/>
            <person name="Abril J.F."/>
            <person name="Agbayani A."/>
            <person name="An H.-J."/>
            <person name="Andrews-Pfannkoch C."/>
            <person name="Baldwin D."/>
            <person name="Ballew R.M."/>
            <person name="Basu A."/>
            <person name="Baxendale J."/>
            <person name="Bayraktaroglu L."/>
            <person name="Beasley E.M."/>
            <person name="Beeson K.Y."/>
            <person name="Benos P.V."/>
            <person name="Berman B.P."/>
            <person name="Bhandari D."/>
            <person name="Bolshakov S."/>
            <person name="Borkova D."/>
            <person name="Botchan M.R."/>
            <person name="Bouck J."/>
            <person name="Brokstein P."/>
            <person name="Brottier P."/>
            <person name="Burtis K.C."/>
            <person name="Busam D.A."/>
            <person name="Butler H."/>
            <person name="Cadieu E."/>
            <person name="Center A."/>
            <person name="Chandra I."/>
            <person name="Cherry J.M."/>
            <person name="Cawley S."/>
            <person name="Dahlke C."/>
            <person name="Davenport L.B."/>
            <person name="Davies P."/>
            <person name="de Pablos B."/>
            <person name="Delcher A."/>
            <person name="Deng Z."/>
            <person name="Mays A.D."/>
            <person name="Dew I."/>
            <person name="Dietz S.M."/>
            <person name="Dodson K."/>
            <person name="Doup L.E."/>
            <person name="Downes M."/>
            <person name="Dugan-Rocha S."/>
            <person name="Dunkov B.C."/>
            <person name="Dunn P."/>
            <person name="Durbin K.J."/>
            <person name="Evangelista C.C."/>
            <person name="Ferraz C."/>
            <person name="Ferriera S."/>
            <person name="Fleischmann W."/>
            <person name="Fosler C."/>
            <person name="Gabrielian A.E."/>
            <person name="Garg N.S."/>
            <person name="Gelbart W.M."/>
            <person name="Glasser K."/>
            <person name="Glodek A."/>
            <person name="Gong F."/>
            <person name="Gorrell J.H."/>
            <person name="Gu Z."/>
            <person name="Guan P."/>
            <person name="Harris M."/>
            <person name="Harris N.L."/>
            <person name="Harvey D.A."/>
            <person name="Heiman T.J."/>
            <person name="Hernandez J.R."/>
            <person name="Houck J."/>
            <person name="Hostin D."/>
            <person name="Houston K.A."/>
            <person name="Howland T.J."/>
            <person name="Wei M.-H."/>
            <person name="Ibegwam C."/>
            <person name="Jalali M."/>
            <person name="Kalush F."/>
            <person name="Karpen G.H."/>
            <person name="Ke Z."/>
            <person name="Kennison J.A."/>
            <person name="Ketchum K.A."/>
            <person name="Kimmel B.E."/>
            <person name="Kodira C.D."/>
            <person name="Kraft C.L."/>
            <person name="Kravitz S."/>
            <person name="Kulp D."/>
            <person name="Lai Z."/>
            <person name="Lasko P."/>
            <person name="Lei Y."/>
            <person name="Levitsky A.A."/>
            <person name="Li J.H."/>
            <person name="Li Z."/>
            <person name="Liang Y."/>
            <person name="Lin X."/>
            <person name="Liu X."/>
            <person name="Mattei B."/>
            <person name="McIntosh T.C."/>
            <person name="McLeod M.P."/>
            <person name="McPherson D."/>
            <person name="Merkulov G."/>
            <person name="Milshina N.V."/>
            <person name="Mobarry C."/>
            <person name="Morris J."/>
            <person name="Moshrefi A."/>
            <person name="Mount S.M."/>
            <person name="Moy M."/>
            <person name="Murphy B."/>
            <person name="Murphy L."/>
            <person name="Muzny D.M."/>
            <person name="Nelson D.L."/>
            <person name="Nelson D.R."/>
            <person name="Nelson K.A."/>
            <person name="Nixon K."/>
            <person name="Nusskern D.R."/>
            <person name="Pacleb J.M."/>
            <person name="Palazzolo M."/>
            <person name="Pittman G.S."/>
            <person name="Pan S."/>
            <person name="Pollard J."/>
            <person name="Puri V."/>
            <person name="Reese M.G."/>
            <person name="Reinert K."/>
            <person name="Remington K."/>
            <person name="Saunders R.D.C."/>
            <person name="Scheeler F."/>
            <person name="Shen H."/>
            <person name="Shue B.C."/>
            <person name="Siden-Kiamos I."/>
            <person name="Simpson M."/>
            <person name="Skupski M.P."/>
            <person name="Smith T.J."/>
            <person name="Spier E."/>
            <person name="Spradling A.C."/>
            <person name="Stapleton M."/>
            <person name="Strong R."/>
            <person name="Sun E."/>
            <person name="Svirskas R."/>
            <person name="Tector C."/>
            <person name="Turner R."/>
            <person name="Venter E."/>
            <person name="Wang A.H."/>
            <person name="Wang X."/>
            <person name="Wang Z.-Y."/>
            <person name="Wassarman D.A."/>
            <person name="Weinstock G.M."/>
            <person name="Weissenbach J."/>
            <person name="Williams S.M."/>
            <person name="Woodage T."/>
            <person name="Worley K.C."/>
            <person name="Wu D."/>
            <person name="Yang S."/>
            <person name="Yao Q.A."/>
            <person name="Ye J."/>
            <person name="Yeh R.-F."/>
            <person name="Zaveri J.S."/>
            <person name="Zhan M."/>
            <person name="Zhang G."/>
            <person name="Zhao Q."/>
            <person name="Zheng L."/>
            <person name="Zheng X.H."/>
            <person name="Zhong F.N."/>
            <person name="Zhong W."/>
            <person name="Zhou X."/>
            <person name="Zhu S.C."/>
            <person name="Zhu X."/>
            <person name="Smith H.O."/>
            <person name="Gibbs R.A."/>
            <person name="Myers E.W."/>
            <person name="Rubin G.M."/>
            <person name="Venter J.C."/>
        </authorList>
    </citation>
    <scope>NUCLEOTIDE SEQUENCE [LARGE SCALE GENOMIC DNA]</scope>
    <source>
        <strain>Berkeley</strain>
    </source>
</reference>
<reference evidence="4" key="3">
    <citation type="journal article" date="2002" name="Genome Biol.">
        <title>Annotation of the Drosophila melanogaster euchromatic genome: a systematic review.</title>
        <authorList>
            <person name="Misra S."/>
            <person name="Crosby M.A."/>
            <person name="Mungall C.J."/>
            <person name="Matthews B.B."/>
            <person name="Campbell K.S."/>
            <person name="Hradecky P."/>
            <person name="Huang Y."/>
            <person name="Kaminker J.S."/>
            <person name="Millburn G.H."/>
            <person name="Prochnik S.E."/>
            <person name="Smith C.D."/>
            <person name="Tupy J.L."/>
            <person name="Whitfield E.J."/>
            <person name="Bayraktaroglu L."/>
            <person name="Berman B.P."/>
            <person name="Bettencourt B.R."/>
            <person name="Celniker S.E."/>
            <person name="de Grey A.D.N.J."/>
            <person name="Drysdale R.A."/>
            <person name="Harris N.L."/>
            <person name="Richter J."/>
            <person name="Russo S."/>
            <person name="Schroeder A.J."/>
            <person name="Shu S.Q."/>
            <person name="Stapleton M."/>
            <person name="Yamada C."/>
            <person name="Ashburner M."/>
            <person name="Gelbart W.M."/>
            <person name="Rubin G.M."/>
            <person name="Lewis S.E."/>
        </authorList>
    </citation>
    <scope>GENOME REANNOTATION</scope>
    <source>
        <strain>Berkeley</strain>
    </source>
</reference>
<reference key="4">
    <citation type="journal article" date="2002" name="Genome Biol.">
        <title>A Drosophila full-length cDNA resource.</title>
        <authorList>
            <person name="Stapleton M."/>
            <person name="Carlson J.W."/>
            <person name="Brokstein P."/>
            <person name="Yu C."/>
            <person name="Champe M."/>
            <person name="George R.A."/>
            <person name="Guarin H."/>
            <person name="Kronmiller B."/>
            <person name="Pacleb J.M."/>
            <person name="Park S."/>
            <person name="Wan K.H."/>
            <person name="Rubin G.M."/>
            <person name="Celniker S.E."/>
        </authorList>
    </citation>
    <scope>NUCLEOTIDE SEQUENCE [LARGE SCALE MRNA]</scope>
    <source>
        <strain>Berkeley</strain>
        <tissue>Head</tissue>
    </source>
</reference>
<reference evidence="4" key="5">
    <citation type="journal article" date="1995" name="BioTechniques">
        <title>Method for attachment of microscopic preparations on glass for in situ hybridization, PRINS and in situ PCR studies.</title>
        <authorList>
            <person name="Dyanov H.M."/>
            <person name="Dzitoeva S.G."/>
        </authorList>
    </citation>
    <scope>NUCLEOTIDE SEQUENCE [MRNA] OF 6-126</scope>
    <scope>TISSUE SPECIFICITY</scope>
    <source>
        <strain>Oregon-RC</strain>
        <tissue>Ejaculatory bulb</tissue>
    </source>
</reference>
<dbReference type="EMBL" id="AJ973478">
    <property type="protein sequence ID" value="CAJ01525.1"/>
    <property type="molecule type" value="mRNA"/>
</dbReference>
<dbReference type="EMBL" id="AE013599">
    <property type="protein sequence ID" value="AAF47140.2"/>
    <property type="molecule type" value="Genomic_DNA"/>
</dbReference>
<dbReference type="EMBL" id="AY113640">
    <property type="protein sequence ID" value="AAM29645.1"/>
    <property type="molecule type" value="mRNA"/>
</dbReference>
<dbReference type="EMBL" id="U08281">
    <property type="protein sequence ID" value="AAA87058.1"/>
    <property type="molecule type" value="mRNA"/>
</dbReference>
<dbReference type="RefSeq" id="NP_001286808.1">
    <property type="nucleotide sequence ID" value="NM_001299879.1"/>
</dbReference>
<dbReference type="RefSeq" id="NP_001286809.1">
    <property type="nucleotide sequence ID" value="NM_001299880.1"/>
</dbReference>
<dbReference type="RefSeq" id="NP_524966.1">
    <property type="nucleotide sequence ID" value="NM_080227.2"/>
</dbReference>
<dbReference type="SMR" id="Q9W1C9"/>
<dbReference type="BioGRID" id="72483">
    <property type="interactions" value="20"/>
</dbReference>
<dbReference type="DIP" id="DIP-17564N"/>
<dbReference type="FunCoup" id="Q9W1C9">
    <property type="interactions" value="54"/>
</dbReference>
<dbReference type="IntAct" id="Q9W1C9">
    <property type="interactions" value="17"/>
</dbReference>
<dbReference type="STRING" id="7227.FBpp0309999"/>
<dbReference type="PaxDb" id="7227-FBpp0072073"/>
<dbReference type="DNASU" id="49821"/>
<dbReference type="EnsemblMetazoa" id="FBtr0072164">
    <property type="protein sequence ID" value="FBpp0072073"/>
    <property type="gene ID" value="FBgn0011695"/>
</dbReference>
<dbReference type="EnsemblMetazoa" id="FBtr0343340">
    <property type="protein sequence ID" value="FBpp0309998"/>
    <property type="gene ID" value="FBgn0011695"/>
</dbReference>
<dbReference type="EnsemblMetazoa" id="FBtr0343341">
    <property type="protein sequence ID" value="FBpp0309999"/>
    <property type="gene ID" value="FBgn0011695"/>
</dbReference>
<dbReference type="GeneID" id="49821"/>
<dbReference type="KEGG" id="dme:Dmel_CG11390"/>
<dbReference type="AGR" id="FB:FBgn0011695"/>
<dbReference type="CTD" id="49821"/>
<dbReference type="FlyBase" id="FBgn0011695">
    <property type="gene designation" value="EbpIII"/>
</dbReference>
<dbReference type="VEuPathDB" id="VectorBase:FBgn0011695"/>
<dbReference type="eggNOG" id="ENOG502S48A">
    <property type="taxonomic scope" value="Eukaryota"/>
</dbReference>
<dbReference type="GeneTree" id="ENSGT00390000011556"/>
<dbReference type="HOGENOM" id="CLU_126727_0_0_1"/>
<dbReference type="InParanoid" id="Q9W1C9"/>
<dbReference type="OMA" id="IYVKRYR"/>
<dbReference type="OrthoDB" id="6344725at2759"/>
<dbReference type="PhylomeDB" id="Q9W1C9"/>
<dbReference type="BioGRID-ORCS" id="49821">
    <property type="hits" value="0 hits in 1 CRISPR screen"/>
</dbReference>
<dbReference type="ChiTaRS" id="EbpIII">
    <property type="organism name" value="fly"/>
</dbReference>
<dbReference type="GenomeRNAi" id="49821"/>
<dbReference type="PRO" id="PR:Q9W1C9"/>
<dbReference type="Proteomes" id="UP000000803">
    <property type="component" value="Chromosome 2R"/>
</dbReference>
<dbReference type="Bgee" id="FBgn0011695">
    <property type="expression patterns" value="Expressed in crop (Drosophila) and 224 other cell types or tissues"/>
</dbReference>
<dbReference type="ExpressionAtlas" id="Q9W1C9">
    <property type="expression patterns" value="baseline and differential"/>
</dbReference>
<dbReference type="GO" id="GO:0005576">
    <property type="term" value="C:extracellular region"/>
    <property type="evidence" value="ECO:0000314"/>
    <property type="project" value="FlyBase"/>
</dbReference>
<dbReference type="GO" id="GO:0042628">
    <property type="term" value="P:mating plug formation"/>
    <property type="evidence" value="ECO:0000250"/>
    <property type="project" value="UniProtKB"/>
</dbReference>
<dbReference type="GO" id="GO:0007552">
    <property type="term" value="P:metamorphosis"/>
    <property type="evidence" value="ECO:0000270"/>
    <property type="project" value="FlyBase"/>
</dbReference>
<dbReference type="GO" id="GO:0009615">
    <property type="term" value="P:response to virus"/>
    <property type="evidence" value="ECO:0000270"/>
    <property type="project" value="FlyBase"/>
</dbReference>
<dbReference type="FunFam" id="1.10.2080.10:FF:000001">
    <property type="entry name" value="ejaculatory bulb-specific protein 3"/>
    <property type="match status" value="1"/>
</dbReference>
<dbReference type="Gene3D" id="1.10.2080.10">
    <property type="entry name" value="Insect odorant-binding protein A10/Ejaculatory bulb-specific protein 3"/>
    <property type="match status" value="1"/>
</dbReference>
<dbReference type="InterPro" id="IPR005055">
    <property type="entry name" value="A10/PebIII"/>
</dbReference>
<dbReference type="InterPro" id="IPR036682">
    <property type="entry name" value="OS_D_A10/PebIII_sf"/>
</dbReference>
<dbReference type="PANTHER" id="PTHR11257">
    <property type="entry name" value="CHEMOSENSORY PROTEIN-RELATED"/>
    <property type="match status" value="1"/>
</dbReference>
<dbReference type="PANTHER" id="PTHR11257:SF12">
    <property type="entry name" value="EJACULATORY BULB-SPECIFIC PROTEIN 3-RELATED"/>
    <property type="match status" value="1"/>
</dbReference>
<dbReference type="Pfam" id="PF03392">
    <property type="entry name" value="OS-D"/>
    <property type="match status" value="1"/>
</dbReference>
<dbReference type="SUPFAM" id="SSF100910">
    <property type="entry name" value="Chemosensory protein Csp2"/>
    <property type="match status" value="1"/>
</dbReference>
<feature type="signal peptide" evidence="2">
    <location>
        <begin position="1"/>
        <end position="17"/>
    </location>
</feature>
<feature type="chain" id="PRO_0000022035" description="Ejaculatory bulb-specific protein 3">
    <location>
        <begin position="18"/>
        <end position="126"/>
    </location>
</feature>
<feature type="sequence conflict" description="In Ref. 5; AAA87058." evidence="4" ref="5">
    <original>A</original>
    <variation>P</variation>
    <location>
        <position position="6"/>
    </location>
</feature>
<feature type="sequence conflict" description="In Ref. 5; AAA87058." evidence="4" ref="5">
    <original>PEEWKQL</original>
    <variation>ARGVEAA</variation>
    <location>
        <begin position="95"/>
        <end position="101"/>
    </location>
</feature>
<feature type="sequence conflict" description="In Ref. 5; AAA87058." evidence="4" ref="5">
    <original>D</original>
    <variation>E</variation>
    <location>
        <position position="108"/>
    </location>
</feature>
<feature type="sequence conflict" description="In Ref. 5; AAA87058." evidence="4" ref="5">
    <original>ATAEASGIKV</original>
    <variation>QPRGSDQGVRRIRFGNTWYMHCIRSTLYLIIKLFLTVGLDLRVWFFP</variation>
    <location>
        <begin position="117"/>
        <end position="126"/>
    </location>
</feature>
<protein>
    <recommendedName>
        <fullName>Ejaculatory bulb-specific protein 3</fullName>
    </recommendedName>
    <alternativeName>
        <fullName>Ejaculatory bulb-specific protein III</fullName>
    </alternativeName>
    <alternativeName>
        <fullName>PEB-meIII</fullName>
    </alternativeName>
    <alternativeName>
        <fullName>PEBmelIII</fullName>
    </alternativeName>
</protein>